<sequence>MANVVENLGKLERRVTISLPKDVVQKEIDARIQKLAKNVRMPGFRPGKVPLKMVAQQYAGQVEAEVLSDKIGQEFFTISRAENLRVAGQPSFAPKEDTQQESTYAFDATFEVYPEVKIGDLATAEVERSTTTIGDAEIDRTLDILRKQRVHFHARGEGGEHGDGGADTAAQNGDRVTVDFVGKIDGVAFQGGTAEDFVFVLGEGRMLPEFETAALGLKAGESREFDLKFPDDYHGKDVAGKTAQFTVTLKKVEWPHLPEIDADFAKSLGVEDGDLTKMRAEIKENLEREAKRRTQSIVKNQVMDALLKISELDVPKALIEQDQQRLVEMARQDLAQRGVPNAKDAPIPAEMFADQAERRVKLGLVLAELVKANGLEAKPEQIRAEVDEFAKSYEDPKEVVRWYYSNQQRLAEMEAFVVESNVVDFVLGKAKVTDKEVSFEALASATAQA</sequence>
<gene>
    <name evidence="1" type="primary">tig</name>
    <name type="ordered locus">BURPS1710b_2482</name>
</gene>
<proteinExistence type="inferred from homology"/>
<feature type="chain" id="PRO_0000256535" description="Trigger factor">
    <location>
        <begin position="1"/>
        <end position="449"/>
    </location>
</feature>
<feature type="domain" description="PPIase FKBP-type" evidence="1">
    <location>
        <begin position="173"/>
        <end position="258"/>
    </location>
</feature>
<keyword id="KW-0131">Cell cycle</keyword>
<keyword id="KW-0132">Cell division</keyword>
<keyword id="KW-0143">Chaperone</keyword>
<keyword id="KW-0963">Cytoplasm</keyword>
<keyword id="KW-0413">Isomerase</keyword>
<keyword id="KW-0697">Rotamase</keyword>
<dbReference type="EC" id="5.2.1.8" evidence="1"/>
<dbReference type="EMBL" id="CP000124">
    <property type="protein sequence ID" value="ABA48515.1"/>
    <property type="molecule type" value="Genomic_DNA"/>
</dbReference>
<dbReference type="RefSeq" id="WP_004521257.1">
    <property type="nucleotide sequence ID" value="NC_007434.1"/>
</dbReference>
<dbReference type="SMR" id="Q3JRC7"/>
<dbReference type="EnsemblBacteria" id="ABA48515">
    <property type="protein sequence ID" value="ABA48515"/>
    <property type="gene ID" value="BURPS1710b_2482"/>
</dbReference>
<dbReference type="GeneID" id="93060596"/>
<dbReference type="KEGG" id="bpm:BURPS1710b_2482"/>
<dbReference type="HOGENOM" id="CLU_033058_2_0_4"/>
<dbReference type="Proteomes" id="UP000002700">
    <property type="component" value="Chromosome I"/>
</dbReference>
<dbReference type="GO" id="GO:0005737">
    <property type="term" value="C:cytoplasm"/>
    <property type="evidence" value="ECO:0007669"/>
    <property type="project" value="UniProtKB-SubCell"/>
</dbReference>
<dbReference type="GO" id="GO:0003755">
    <property type="term" value="F:peptidyl-prolyl cis-trans isomerase activity"/>
    <property type="evidence" value="ECO:0007669"/>
    <property type="project" value="UniProtKB-UniRule"/>
</dbReference>
<dbReference type="GO" id="GO:0044183">
    <property type="term" value="F:protein folding chaperone"/>
    <property type="evidence" value="ECO:0007669"/>
    <property type="project" value="TreeGrafter"/>
</dbReference>
<dbReference type="GO" id="GO:0043022">
    <property type="term" value="F:ribosome binding"/>
    <property type="evidence" value="ECO:0007669"/>
    <property type="project" value="TreeGrafter"/>
</dbReference>
<dbReference type="GO" id="GO:0051083">
    <property type="term" value="P:'de novo' cotranslational protein folding"/>
    <property type="evidence" value="ECO:0007669"/>
    <property type="project" value="TreeGrafter"/>
</dbReference>
<dbReference type="GO" id="GO:0051301">
    <property type="term" value="P:cell division"/>
    <property type="evidence" value="ECO:0007669"/>
    <property type="project" value="UniProtKB-KW"/>
</dbReference>
<dbReference type="GO" id="GO:0061077">
    <property type="term" value="P:chaperone-mediated protein folding"/>
    <property type="evidence" value="ECO:0007669"/>
    <property type="project" value="TreeGrafter"/>
</dbReference>
<dbReference type="GO" id="GO:0015031">
    <property type="term" value="P:protein transport"/>
    <property type="evidence" value="ECO:0007669"/>
    <property type="project" value="UniProtKB-UniRule"/>
</dbReference>
<dbReference type="GO" id="GO:0043335">
    <property type="term" value="P:protein unfolding"/>
    <property type="evidence" value="ECO:0007669"/>
    <property type="project" value="TreeGrafter"/>
</dbReference>
<dbReference type="FunFam" id="3.10.50.40:FF:000001">
    <property type="entry name" value="Trigger factor"/>
    <property type="match status" value="1"/>
</dbReference>
<dbReference type="Gene3D" id="3.10.50.40">
    <property type="match status" value="1"/>
</dbReference>
<dbReference type="Gene3D" id="3.30.70.1050">
    <property type="entry name" value="Trigger factor ribosome-binding domain"/>
    <property type="match status" value="1"/>
</dbReference>
<dbReference type="Gene3D" id="1.10.3120.10">
    <property type="entry name" value="Trigger factor, C-terminal domain"/>
    <property type="match status" value="1"/>
</dbReference>
<dbReference type="HAMAP" id="MF_00303">
    <property type="entry name" value="Trigger_factor_Tig"/>
    <property type="match status" value="1"/>
</dbReference>
<dbReference type="InterPro" id="IPR046357">
    <property type="entry name" value="PPIase_dom_sf"/>
</dbReference>
<dbReference type="InterPro" id="IPR001179">
    <property type="entry name" value="PPIase_FKBP_dom"/>
</dbReference>
<dbReference type="InterPro" id="IPR005215">
    <property type="entry name" value="Trig_fac"/>
</dbReference>
<dbReference type="InterPro" id="IPR008880">
    <property type="entry name" value="Trigger_fac_C"/>
</dbReference>
<dbReference type="InterPro" id="IPR037041">
    <property type="entry name" value="Trigger_fac_C_sf"/>
</dbReference>
<dbReference type="InterPro" id="IPR008881">
    <property type="entry name" value="Trigger_fac_ribosome-bd_bac"/>
</dbReference>
<dbReference type="InterPro" id="IPR036611">
    <property type="entry name" value="Trigger_fac_ribosome-bd_sf"/>
</dbReference>
<dbReference type="InterPro" id="IPR027304">
    <property type="entry name" value="Trigger_fact/SurA_dom_sf"/>
</dbReference>
<dbReference type="NCBIfam" id="TIGR00115">
    <property type="entry name" value="tig"/>
    <property type="match status" value="1"/>
</dbReference>
<dbReference type="PANTHER" id="PTHR30560">
    <property type="entry name" value="TRIGGER FACTOR CHAPERONE AND PEPTIDYL-PROLYL CIS/TRANS ISOMERASE"/>
    <property type="match status" value="1"/>
</dbReference>
<dbReference type="PANTHER" id="PTHR30560:SF3">
    <property type="entry name" value="TRIGGER FACTOR-LIKE PROTEIN TIG, CHLOROPLASTIC"/>
    <property type="match status" value="1"/>
</dbReference>
<dbReference type="Pfam" id="PF00254">
    <property type="entry name" value="FKBP_C"/>
    <property type="match status" value="1"/>
</dbReference>
<dbReference type="Pfam" id="PF05698">
    <property type="entry name" value="Trigger_C"/>
    <property type="match status" value="1"/>
</dbReference>
<dbReference type="Pfam" id="PF05697">
    <property type="entry name" value="Trigger_N"/>
    <property type="match status" value="1"/>
</dbReference>
<dbReference type="PIRSF" id="PIRSF003095">
    <property type="entry name" value="Trigger_factor"/>
    <property type="match status" value="1"/>
</dbReference>
<dbReference type="SUPFAM" id="SSF54534">
    <property type="entry name" value="FKBP-like"/>
    <property type="match status" value="1"/>
</dbReference>
<dbReference type="SUPFAM" id="SSF109998">
    <property type="entry name" value="Triger factor/SurA peptide-binding domain-like"/>
    <property type="match status" value="1"/>
</dbReference>
<dbReference type="SUPFAM" id="SSF102735">
    <property type="entry name" value="Trigger factor ribosome-binding domain"/>
    <property type="match status" value="1"/>
</dbReference>
<dbReference type="PROSITE" id="PS50059">
    <property type="entry name" value="FKBP_PPIASE"/>
    <property type="match status" value="1"/>
</dbReference>
<name>TIG_BURP1</name>
<reference key="1">
    <citation type="journal article" date="2010" name="Genome Biol. Evol.">
        <title>Continuing evolution of Burkholderia mallei through genome reduction and large-scale rearrangements.</title>
        <authorList>
            <person name="Losada L."/>
            <person name="Ronning C.M."/>
            <person name="DeShazer D."/>
            <person name="Woods D."/>
            <person name="Fedorova N."/>
            <person name="Kim H.S."/>
            <person name="Shabalina S.A."/>
            <person name="Pearson T.R."/>
            <person name="Brinkac L."/>
            <person name="Tan P."/>
            <person name="Nandi T."/>
            <person name="Crabtree J."/>
            <person name="Badger J."/>
            <person name="Beckstrom-Sternberg S."/>
            <person name="Saqib M."/>
            <person name="Schutzer S.E."/>
            <person name="Keim P."/>
            <person name="Nierman W.C."/>
        </authorList>
    </citation>
    <scope>NUCLEOTIDE SEQUENCE [LARGE SCALE GENOMIC DNA]</scope>
    <source>
        <strain>1710b</strain>
    </source>
</reference>
<protein>
    <recommendedName>
        <fullName evidence="1">Trigger factor</fullName>
        <shortName evidence="1">TF</shortName>
        <ecNumber evidence="1">5.2.1.8</ecNumber>
    </recommendedName>
    <alternativeName>
        <fullName evidence="1">PPIase</fullName>
    </alternativeName>
</protein>
<organism>
    <name type="scientific">Burkholderia pseudomallei (strain 1710b)</name>
    <dbReference type="NCBI Taxonomy" id="320372"/>
    <lineage>
        <taxon>Bacteria</taxon>
        <taxon>Pseudomonadati</taxon>
        <taxon>Pseudomonadota</taxon>
        <taxon>Betaproteobacteria</taxon>
        <taxon>Burkholderiales</taxon>
        <taxon>Burkholderiaceae</taxon>
        <taxon>Burkholderia</taxon>
        <taxon>pseudomallei group</taxon>
    </lineage>
</organism>
<comment type="function">
    <text evidence="1">Involved in protein export. Acts as a chaperone by maintaining the newly synthesized protein in an open conformation. Functions as a peptidyl-prolyl cis-trans isomerase.</text>
</comment>
<comment type="catalytic activity">
    <reaction evidence="1">
        <text>[protein]-peptidylproline (omega=180) = [protein]-peptidylproline (omega=0)</text>
        <dbReference type="Rhea" id="RHEA:16237"/>
        <dbReference type="Rhea" id="RHEA-COMP:10747"/>
        <dbReference type="Rhea" id="RHEA-COMP:10748"/>
        <dbReference type="ChEBI" id="CHEBI:83833"/>
        <dbReference type="ChEBI" id="CHEBI:83834"/>
        <dbReference type="EC" id="5.2.1.8"/>
    </reaction>
</comment>
<comment type="subcellular location">
    <subcellularLocation>
        <location>Cytoplasm</location>
    </subcellularLocation>
    <text evidence="1">About half TF is bound to the ribosome near the polypeptide exit tunnel while the other half is free in the cytoplasm.</text>
</comment>
<comment type="domain">
    <text evidence="1">Consists of 3 domains; the N-terminus binds the ribosome, the middle domain has PPIase activity, while the C-terminus has intrinsic chaperone activity on its own.</text>
</comment>
<comment type="similarity">
    <text evidence="1">Belongs to the FKBP-type PPIase family. Tig subfamily.</text>
</comment>
<accession>Q3JRC7</accession>
<evidence type="ECO:0000255" key="1">
    <source>
        <dbReference type="HAMAP-Rule" id="MF_00303"/>
    </source>
</evidence>